<feature type="transit peptide" description="Chloroplast" evidence="2">
    <location>
        <begin position="1"/>
        <end position="45"/>
    </location>
</feature>
<feature type="chain" id="PRO_0000418609" description="Probable sodium/metabolite cotransporter BASS2, chloroplastic">
    <location>
        <begin position="46"/>
        <end position="419"/>
    </location>
</feature>
<feature type="transmembrane region" description="Helical" evidence="2">
    <location>
        <begin position="106"/>
        <end position="126"/>
    </location>
</feature>
<feature type="transmembrane region" description="Helical" evidence="2">
    <location>
        <begin position="137"/>
        <end position="157"/>
    </location>
</feature>
<feature type="transmembrane region" description="Helical" evidence="2">
    <location>
        <begin position="170"/>
        <end position="190"/>
    </location>
</feature>
<feature type="transmembrane region" description="Helical" evidence="2">
    <location>
        <begin position="194"/>
        <end position="214"/>
    </location>
</feature>
<feature type="transmembrane region" description="Helical" evidence="2">
    <location>
        <begin position="225"/>
        <end position="245"/>
    </location>
</feature>
<feature type="transmembrane region" description="Helical" evidence="2">
    <location>
        <begin position="259"/>
        <end position="279"/>
    </location>
</feature>
<feature type="transmembrane region" description="Helical" evidence="2">
    <location>
        <begin position="291"/>
        <end position="311"/>
    </location>
</feature>
<feature type="transmembrane region" description="Helical" evidence="2">
    <location>
        <begin position="323"/>
        <end position="343"/>
    </location>
</feature>
<feature type="transmembrane region" description="Helical" evidence="2">
    <location>
        <begin position="384"/>
        <end position="404"/>
    </location>
</feature>
<evidence type="ECO:0000250" key="1"/>
<evidence type="ECO:0000255" key="2"/>
<evidence type="ECO:0000269" key="3">
    <source>
    </source>
</evidence>
<evidence type="ECO:0000305" key="4"/>
<accession>Q5VRB2</accession>
<accession>A0A0P0V5S2</accession>
<gene>
    <name type="primary">BASS2</name>
    <name type="synonym">SBF1</name>
    <name type="ordered locus">Os01g0645200</name>
    <name type="ordered locus">LOC_Os01g45750</name>
    <name type="ORF">OsJ_02805</name>
    <name type="ORF">P0707D10.23-1</name>
</gene>
<proteinExistence type="evidence at transcript level"/>
<protein>
    <recommendedName>
        <fullName>Probable sodium/metabolite cotransporter BASS2, chloroplastic</fullName>
    </recommendedName>
    <alternativeName>
        <fullName>Bile acid-sodium symporter family protein 2</fullName>
    </alternativeName>
</protein>
<name>BASS2_ORYSJ</name>
<organism>
    <name type="scientific">Oryza sativa subsp. japonica</name>
    <name type="common">Rice</name>
    <dbReference type="NCBI Taxonomy" id="39947"/>
    <lineage>
        <taxon>Eukaryota</taxon>
        <taxon>Viridiplantae</taxon>
        <taxon>Streptophyta</taxon>
        <taxon>Embryophyta</taxon>
        <taxon>Tracheophyta</taxon>
        <taxon>Spermatophyta</taxon>
        <taxon>Magnoliopsida</taxon>
        <taxon>Liliopsida</taxon>
        <taxon>Poales</taxon>
        <taxon>Poaceae</taxon>
        <taxon>BOP clade</taxon>
        <taxon>Oryzoideae</taxon>
        <taxon>Oryzeae</taxon>
        <taxon>Oryzinae</taxon>
        <taxon>Oryza</taxon>
        <taxon>Oryza sativa</taxon>
    </lineage>
</organism>
<reference key="1">
    <citation type="journal article" date="2002" name="Nature">
        <title>The genome sequence and structure of rice chromosome 1.</title>
        <authorList>
            <person name="Sasaki T."/>
            <person name="Matsumoto T."/>
            <person name="Yamamoto K."/>
            <person name="Sakata K."/>
            <person name="Baba T."/>
            <person name="Katayose Y."/>
            <person name="Wu J."/>
            <person name="Niimura Y."/>
            <person name="Cheng Z."/>
            <person name="Nagamura Y."/>
            <person name="Antonio B.A."/>
            <person name="Kanamori H."/>
            <person name="Hosokawa S."/>
            <person name="Masukawa M."/>
            <person name="Arikawa K."/>
            <person name="Chiden Y."/>
            <person name="Hayashi M."/>
            <person name="Okamoto M."/>
            <person name="Ando T."/>
            <person name="Aoki H."/>
            <person name="Arita K."/>
            <person name="Hamada M."/>
            <person name="Harada C."/>
            <person name="Hijishita S."/>
            <person name="Honda M."/>
            <person name="Ichikawa Y."/>
            <person name="Idonuma A."/>
            <person name="Iijima M."/>
            <person name="Ikeda M."/>
            <person name="Ikeno M."/>
            <person name="Ito S."/>
            <person name="Ito T."/>
            <person name="Ito Y."/>
            <person name="Ito Y."/>
            <person name="Iwabuchi A."/>
            <person name="Kamiya K."/>
            <person name="Karasawa W."/>
            <person name="Katagiri S."/>
            <person name="Kikuta A."/>
            <person name="Kobayashi N."/>
            <person name="Kono I."/>
            <person name="Machita K."/>
            <person name="Maehara T."/>
            <person name="Mizuno H."/>
            <person name="Mizubayashi T."/>
            <person name="Mukai Y."/>
            <person name="Nagasaki H."/>
            <person name="Nakashima M."/>
            <person name="Nakama Y."/>
            <person name="Nakamichi Y."/>
            <person name="Nakamura M."/>
            <person name="Namiki N."/>
            <person name="Negishi M."/>
            <person name="Ohta I."/>
            <person name="Ono N."/>
            <person name="Saji S."/>
            <person name="Sakai K."/>
            <person name="Shibata M."/>
            <person name="Shimokawa T."/>
            <person name="Shomura A."/>
            <person name="Song J."/>
            <person name="Takazaki Y."/>
            <person name="Terasawa K."/>
            <person name="Tsuji K."/>
            <person name="Waki K."/>
            <person name="Yamagata H."/>
            <person name="Yamane H."/>
            <person name="Yoshiki S."/>
            <person name="Yoshihara R."/>
            <person name="Yukawa K."/>
            <person name="Zhong H."/>
            <person name="Iwama H."/>
            <person name="Endo T."/>
            <person name="Ito H."/>
            <person name="Hahn J.H."/>
            <person name="Kim H.-I."/>
            <person name="Eun M.-Y."/>
            <person name="Yano M."/>
            <person name="Jiang J."/>
            <person name="Gojobori T."/>
        </authorList>
    </citation>
    <scope>NUCLEOTIDE SEQUENCE [LARGE SCALE GENOMIC DNA]</scope>
    <source>
        <strain>cv. Nipponbare</strain>
    </source>
</reference>
<reference key="2">
    <citation type="journal article" date="2005" name="Nature">
        <title>The map-based sequence of the rice genome.</title>
        <authorList>
            <consortium name="International rice genome sequencing project (IRGSP)"/>
        </authorList>
    </citation>
    <scope>NUCLEOTIDE SEQUENCE [LARGE SCALE GENOMIC DNA]</scope>
    <source>
        <strain>cv. Nipponbare</strain>
    </source>
</reference>
<reference key="3">
    <citation type="journal article" date="2008" name="Nucleic Acids Res.">
        <title>The rice annotation project database (RAP-DB): 2008 update.</title>
        <authorList>
            <consortium name="The rice annotation project (RAP)"/>
        </authorList>
    </citation>
    <scope>GENOME REANNOTATION</scope>
    <source>
        <strain>cv. Nipponbare</strain>
    </source>
</reference>
<reference key="4">
    <citation type="journal article" date="2013" name="Rice">
        <title>Improvement of the Oryza sativa Nipponbare reference genome using next generation sequence and optical map data.</title>
        <authorList>
            <person name="Kawahara Y."/>
            <person name="de la Bastide M."/>
            <person name="Hamilton J.P."/>
            <person name="Kanamori H."/>
            <person name="McCombie W.R."/>
            <person name="Ouyang S."/>
            <person name="Schwartz D.C."/>
            <person name="Tanaka T."/>
            <person name="Wu J."/>
            <person name="Zhou S."/>
            <person name="Childs K.L."/>
            <person name="Davidson R.M."/>
            <person name="Lin H."/>
            <person name="Quesada-Ocampo L."/>
            <person name="Vaillancourt B."/>
            <person name="Sakai H."/>
            <person name="Lee S.S."/>
            <person name="Kim J."/>
            <person name="Numa H."/>
            <person name="Itoh T."/>
            <person name="Buell C.R."/>
            <person name="Matsumoto T."/>
        </authorList>
    </citation>
    <scope>GENOME REANNOTATION</scope>
    <source>
        <strain>cv. Nipponbare</strain>
    </source>
</reference>
<reference key="5">
    <citation type="journal article" date="2005" name="PLoS Biol.">
        <title>The genomes of Oryza sativa: a history of duplications.</title>
        <authorList>
            <person name="Yu J."/>
            <person name="Wang J."/>
            <person name="Lin W."/>
            <person name="Li S."/>
            <person name="Li H."/>
            <person name="Zhou J."/>
            <person name="Ni P."/>
            <person name="Dong W."/>
            <person name="Hu S."/>
            <person name="Zeng C."/>
            <person name="Zhang J."/>
            <person name="Zhang Y."/>
            <person name="Li R."/>
            <person name="Xu Z."/>
            <person name="Li S."/>
            <person name="Li X."/>
            <person name="Zheng H."/>
            <person name="Cong L."/>
            <person name="Lin L."/>
            <person name="Yin J."/>
            <person name="Geng J."/>
            <person name="Li G."/>
            <person name="Shi J."/>
            <person name="Liu J."/>
            <person name="Lv H."/>
            <person name="Li J."/>
            <person name="Wang J."/>
            <person name="Deng Y."/>
            <person name="Ran L."/>
            <person name="Shi X."/>
            <person name="Wang X."/>
            <person name="Wu Q."/>
            <person name="Li C."/>
            <person name="Ren X."/>
            <person name="Wang J."/>
            <person name="Wang X."/>
            <person name="Li D."/>
            <person name="Liu D."/>
            <person name="Zhang X."/>
            <person name="Ji Z."/>
            <person name="Zhao W."/>
            <person name="Sun Y."/>
            <person name="Zhang Z."/>
            <person name="Bao J."/>
            <person name="Han Y."/>
            <person name="Dong L."/>
            <person name="Ji J."/>
            <person name="Chen P."/>
            <person name="Wu S."/>
            <person name="Liu J."/>
            <person name="Xiao Y."/>
            <person name="Bu D."/>
            <person name="Tan J."/>
            <person name="Yang L."/>
            <person name="Ye C."/>
            <person name="Zhang J."/>
            <person name="Xu J."/>
            <person name="Zhou Y."/>
            <person name="Yu Y."/>
            <person name="Zhang B."/>
            <person name="Zhuang S."/>
            <person name="Wei H."/>
            <person name="Liu B."/>
            <person name="Lei M."/>
            <person name="Yu H."/>
            <person name="Li Y."/>
            <person name="Xu H."/>
            <person name="Wei S."/>
            <person name="He X."/>
            <person name="Fang L."/>
            <person name="Zhang Z."/>
            <person name="Zhang Y."/>
            <person name="Huang X."/>
            <person name="Su Z."/>
            <person name="Tong W."/>
            <person name="Li J."/>
            <person name="Tong Z."/>
            <person name="Li S."/>
            <person name="Ye J."/>
            <person name="Wang L."/>
            <person name="Fang L."/>
            <person name="Lei T."/>
            <person name="Chen C.-S."/>
            <person name="Chen H.-C."/>
            <person name="Xu Z."/>
            <person name="Li H."/>
            <person name="Huang H."/>
            <person name="Zhang F."/>
            <person name="Xu H."/>
            <person name="Li N."/>
            <person name="Zhao C."/>
            <person name="Li S."/>
            <person name="Dong L."/>
            <person name="Huang Y."/>
            <person name="Li L."/>
            <person name="Xi Y."/>
            <person name="Qi Q."/>
            <person name="Li W."/>
            <person name="Zhang B."/>
            <person name="Hu W."/>
            <person name="Zhang Y."/>
            <person name="Tian X."/>
            <person name="Jiao Y."/>
            <person name="Liang X."/>
            <person name="Jin J."/>
            <person name="Gao L."/>
            <person name="Zheng W."/>
            <person name="Hao B."/>
            <person name="Liu S.-M."/>
            <person name="Wang W."/>
            <person name="Yuan L."/>
            <person name="Cao M."/>
            <person name="McDermott J."/>
            <person name="Samudrala R."/>
            <person name="Wang J."/>
            <person name="Wong G.K.-S."/>
            <person name="Yang H."/>
        </authorList>
    </citation>
    <scope>NUCLEOTIDE SEQUENCE [LARGE SCALE GENOMIC DNA]</scope>
    <source>
        <strain>cv. Nipponbare</strain>
    </source>
</reference>
<reference key="6">
    <citation type="journal article" date="2003" name="Science">
        <title>Collection, mapping, and annotation of over 28,000 cDNA clones from japonica rice.</title>
        <authorList>
            <consortium name="The rice full-length cDNA consortium"/>
        </authorList>
    </citation>
    <scope>NUCLEOTIDE SEQUENCE [LARGE SCALE MRNA]</scope>
    <source>
        <strain>cv. Nipponbare</strain>
    </source>
</reference>
<reference key="7">
    <citation type="journal article" date="2002" name="J. Exp. Bot.">
        <title>The novel rice (Oryza sativa L.) gene OsSbf1 encodes a putative member of the Na+/bile acid symporter family.</title>
        <authorList>
            <person name="Rzewuski G."/>
            <person name="Sauter M."/>
        </authorList>
    </citation>
    <scope>INDUCTION</scope>
</reference>
<dbReference type="EMBL" id="AP002910">
    <property type="protein sequence ID" value="BAD68006.1"/>
    <property type="molecule type" value="Genomic_DNA"/>
</dbReference>
<dbReference type="EMBL" id="AP008207">
    <property type="protein sequence ID" value="BAF05615.1"/>
    <property type="molecule type" value="Genomic_DNA"/>
</dbReference>
<dbReference type="EMBL" id="AP014957">
    <property type="protein sequence ID" value="BAS73399.1"/>
    <property type="molecule type" value="Genomic_DNA"/>
</dbReference>
<dbReference type="EMBL" id="CM000138">
    <property type="protein sequence ID" value="EEE55076.1"/>
    <property type="molecule type" value="Genomic_DNA"/>
</dbReference>
<dbReference type="EMBL" id="AK069337">
    <property type="protein sequence ID" value="BAG91387.1"/>
    <property type="molecule type" value="mRNA"/>
</dbReference>
<dbReference type="RefSeq" id="XP_015621662.1">
    <property type="nucleotide sequence ID" value="XM_015766176.1"/>
</dbReference>
<dbReference type="SMR" id="Q5VRB2"/>
<dbReference type="FunCoup" id="Q5VRB2">
    <property type="interactions" value="619"/>
</dbReference>
<dbReference type="STRING" id="39947.Q5VRB2"/>
<dbReference type="PaxDb" id="39947-Q5VRB2"/>
<dbReference type="EnsemblPlants" id="Os01t0645200-02">
    <property type="protein sequence ID" value="Os01t0645200-02"/>
    <property type="gene ID" value="Os01g0645200"/>
</dbReference>
<dbReference type="EnsemblPlants" id="Os01t0645200-03">
    <property type="protein sequence ID" value="Os01t0645200-03"/>
    <property type="gene ID" value="Os01g0645200"/>
</dbReference>
<dbReference type="Gramene" id="Os01t0645200-02">
    <property type="protein sequence ID" value="Os01t0645200-02"/>
    <property type="gene ID" value="Os01g0645200"/>
</dbReference>
<dbReference type="Gramene" id="Os01t0645200-03">
    <property type="protein sequence ID" value="Os01t0645200-03"/>
    <property type="gene ID" value="Os01g0645200"/>
</dbReference>
<dbReference type="KEGG" id="dosa:Os01g0645200"/>
<dbReference type="eggNOG" id="KOG2718">
    <property type="taxonomic scope" value="Eukaryota"/>
</dbReference>
<dbReference type="HOGENOM" id="CLU_034788_1_2_1"/>
<dbReference type="InParanoid" id="Q5VRB2"/>
<dbReference type="OMA" id="AHYVIMP"/>
<dbReference type="OrthoDB" id="203097at2759"/>
<dbReference type="Proteomes" id="UP000000763">
    <property type="component" value="Chromosome 1"/>
</dbReference>
<dbReference type="Proteomes" id="UP000007752">
    <property type="component" value="Chromosome 1"/>
</dbReference>
<dbReference type="Proteomes" id="UP000059680">
    <property type="component" value="Chromosome 1"/>
</dbReference>
<dbReference type="ExpressionAtlas" id="Q5VRB2">
    <property type="expression patterns" value="baseline and differential"/>
</dbReference>
<dbReference type="GO" id="GO:0009941">
    <property type="term" value="C:chloroplast envelope"/>
    <property type="evidence" value="ECO:0007669"/>
    <property type="project" value="UniProtKB-SubCell"/>
</dbReference>
<dbReference type="GO" id="GO:0016020">
    <property type="term" value="C:membrane"/>
    <property type="evidence" value="ECO:0007669"/>
    <property type="project" value="UniProtKB-SubCell"/>
</dbReference>
<dbReference type="GO" id="GO:0015293">
    <property type="term" value="F:symporter activity"/>
    <property type="evidence" value="ECO:0007669"/>
    <property type="project" value="UniProtKB-KW"/>
</dbReference>
<dbReference type="FunFam" id="1.20.1530.20:FF:000018">
    <property type="entry name" value="Probable sodium/metabolite cotransporter BASS1, chloroplastic"/>
    <property type="match status" value="1"/>
</dbReference>
<dbReference type="Gene3D" id="1.20.1530.20">
    <property type="match status" value="1"/>
</dbReference>
<dbReference type="InterPro" id="IPR002657">
    <property type="entry name" value="BilAc:Na_symport/Acr3"/>
</dbReference>
<dbReference type="InterPro" id="IPR004710">
    <property type="entry name" value="Bilac:Na_transpt"/>
</dbReference>
<dbReference type="InterPro" id="IPR038770">
    <property type="entry name" value="Na+/solute_symporter_sf"/>
</dbReference>
<dbReference type="PANTHER" id="PTHR10361">
    <property type="entry name" value="SODIUM-BILE ACID COTRANSPORTER"/>
    <property type="match status" value="1"/>
</dbReference>
<dbReference type="PANTHER" id="PTHR10361:SF62">
    <property type="entry name" value="SODIUM_PYRUVATE COTRANSPORTER BASS2, CHLOROPLASTIC"/>
    <property type="match status" value="1"/>
</dbReference>
<dbReference type="Pfam" id="PF01758">
    <property type="entry name" value="SBF"/>
    <property type="match status" value="1"/>
</dbReference>
<keyword id="KW-0150">Chloroplast</keyword>
<keyword id="KW-0472">Membrane</keyword>
<keyword id="KW-0934">Plastid</keyword>
<keyword id="KW-1185">Reference proteome</keyword>
<keyword id="KW-0769">Symport</keyword>
<keyword id="KW-0809">Transit peptide</keyword>
<keyword id="KW-0812">Transmembrane</keyword>
<keyword id="KW-1133">Transmembrane helix</keyword>
<keyword id="KW-0813">Transport</keyword>
<sequence>MAASTTCPARSMASVSRALRPRPHAAIASAAVRTAARLGGGLGIVCSMPSYGRKEKEEWGLTIASAPATTAAPALRSCQLLCKAEANISSNLPESIPSEANQYEKIVELLTTLFPVWVILGTIIGIYKPSMVTWLETDLFTVGLGFLMLSMGLTLTFEDFRRCMRNPWTVGVGFLAQYLIKPMLGFAIAMTLKLSAPLATGLILVSCCPGGQASNVATYISKGNVALSVLMTTCSTIGAIVMTPLLTKLLAGQLVPVDAAGLAISTFQVVLLPTIVGVLAHEYFPKFTERIISITPLIGVLLTTLLCASPIGQVSEVLKAQGGQLIIPVALLHVAAFALGYWLSKVSSFGESTSRTISIECGMQSSALGFLLAQKHFTNPLVAVPSAVSVVCMALGGSALAVFWRNRGLPANDKDDFKE</sequence>
<comment type="function">
    <text evidence="1">May function as sodium-coupled metabolite transporter across the chloroplast envelope.</text>
</comment>
<comment type="subcellular location">
    <subcellularLocation>
        <location evidence="4">Membrane</location>
        <topology evidence="4">Multi-pass membrane protein</topology>
    </subcellularLocation>
    <subcellularLocation>
        <location evidence="4">Plastid</location>
        <location evidence="4">Chloroplast envelope</location>
    </subcellularLocation>
</comment>
<comment type="induction">
    <text evidence="3">By ethylene, gibberellin and submergence.</text>
</comment>
<comment type="similarity">
    <text evidence="4">Belongs to the bile acid:sodium symporter (BASS) (TC 2.A.28) family.</text>
</comment>